<keyword id="KW-0963">Cytoplasm</keyword>
<keyword id="KW-0488">Methylation</keyword>
<keyword id="KW-0648">Protein biosynthesis</keyword>
<proteinExistence type="inferred from homology"/>
<reference key="1">
    <citation type="journal article" date="2010" name="Genome Biol. Evol.">
        <title>Continuing evolution of Burkholderia mallei through genome reduction and large-scale rearrangements.</title>
        <authorList>
            <person name="Losada L."/>
            <person name="Ronning C.M."/>
            <person name="DeShazer D."/>
            <person name="Woods D."/>
            <person name="Fedorova N."/>
            <person name="Kim H.S."/>
            <person name="Shabalina S.A."/>
            <person name="Pearson T.R."/>
            <person name="Brinkac L."/>
            <person name="Tan P."/>
            <person name="Nandi T."/>
            <person name="Crabtree J."/>
            <person name="Badger J."/>
            <person name="Beckstrom-Sternberg S."/>
            <person name="Saqib M."/>
            <person name="Schutzer S.E."/>
            <person name="Keim P."/>
            <person name="Nierman W.C."/>
        </authorList>
    </citation>
    <scope>NUCLEOTIDE SEQUENCE [LARGE SCALE GENOMIC DNA]</scope>
    <source>
        <strain>1710b</strain>
    </source>
</reference>
<gene>
    <name evidence="1" type="primary">prfA</name>
    <name type="ordered locus">BURPS1710b_3603</name>
</gene>
<accession>Q3JN85</accession>
<evidence type="ECO:0000255" key="1">
    <source>
        <dbReference type="HAMAP-Rule" id="MF_00093"/>
    </source>
</evidence>
<name>RF1_BURP1</name>
<feature type="chain" id="PRO_0000263245" description="Peptide chain release factor 1">
    <location>
        <begin position="1"/>
        <end position="360"/>
    </location>
</feature>
<feature type="modified residue" description="N5-methylglutamine" evidence="1">
    <location>
        <position position="235"/>
    </location>
</feature>
<sequence length="360" mass="40484">MKTSMQSKLDQLTTRLAELNDLLSRENVTADLDQYRKLTREHAEIGPVVEHYAQWRQARADELAAQELLADASMRDFAEDELRGARDRMGRLAAELQTMLLPKDPNDERNIFVEIRAGTGGDESALFAGDLLRMYLRYAERQRWQVEMMSESPSDLGGYKEVIVRIAGYGAYSRLKFESGGHRVQRVPATETQGRIHTSACTVAVMPEADEIGEVEINPADLRIDTFRASGAGGQHINKTDSAVRVTHIPTGIVVECQDDRSQHKNKDRALKVLAARIKDKQYHEQHAKEAATRKSLIGSGDRSERIRTYNFPQGRMTDHRINLTLYKLEQIMDGDLDELIAALVSEHQAELLASLGDAE</sequence>
<comment type="function">
    <text evidence="1">Peptide chain release factor 1 directs the termination of translation in response to the peptide chain termination codons UAG and UAA.</text>
</comment>
<comment type="subcellular location">
    <subcellularLocation>
        <location evidence="1">Cytoplasm</location>
    </subcellularLocation>
</comment>
<comment type="PTM">
    <text evidence="1">Methylated by PrmC. Methylation increases the termination efficiency of RF1.</text>
</comment>
<comment type="similarity">
    <text evidence="1">Belongs to the prokaryotic/mitochondrial release factor family.</text>
</comment>
<dbReference type="EMBL" id="CP000124">
    <property type="protein sequence ID" value="ABA48694.1"/>
    <property type="molecule type" value="Genomic_DNA"/>
</dbReference>
<dbReference type="RefSeq" id="WP_004527811.1">
    <property type="nucleotide sequence ID" value="NC_007434.1"/>
</dbReference>
<dbReference type="SMR" id="Q3JN85"/>
<dbReference type="EnsemblBacteria" id="ABA48694">
    <property type="protein sequence ID" value="ABA48694"/>
    <property type="gene ID" value="BURPS1710b_3603"/>
</dbReference>
<dbReference type="GeneID" id="93061687"/>
<dbReference type="KEGG" id="bpm:BURPS1710b_3603"/>
<dbReference type="HOGENOM" id="CLU_036856_0_1_4"/>
<dbReference type="Proteomes" id="UP000002700">
    <property type="component" value="Chromosome I"/>
</dbReference>
<dbReference type="GO" id="GO:0005737">
    <property type="term" value="C:cytoplasm"/>
    <property type="evidence" value="ECO:0007669"/>
    <property type="project" value="UniProtKB-SubCell"/>
</dbReference>
<dbReference type="GO" id="GO:0016149">
    <property type="term" value="F:translation release factor activity, codon specific"/>
    <property type="evidence" value="ECO:0007669"/>
    <property type="project" value="UniProtKB-UniRule"/>
</dbReference>
<dbReference type="FunFam" id="3.30.160.20:FF:000004">
    <property type="entry name" value="Peptide chain release factor 1"/>
    <property type="match status" value="1"/>
</dbReference>
<dbReference type="FunFam" id="3.30.70.1660:FF:000002">
    <property type="entry name" value="Peptide chain release factor 1"/>
    <property type="match status" value="1"/>
</dbReference>
<dbReference type="FunFam" id="3.30.70.1660:FF:000004">
    <property type="entry name" value="Peptide chain release factor 1"/>
    <property type="match status" value="1"/>
</dbReference>
<dbReference type="Gene3D" id="3.30.160.20">
    <property type="match status" value="1"/>
</dbReference>
<dbReference type="Gene3D" id="3.30.70.1660">
    <property type="match status" value="1"/>
</dbReference>
<dbReference type="Gene3D" id="6.10.140.1950">
    <property type="match status" value="1"/>
</dbReference>
<dbReference type="HAMAP" id="MF_00093">
    <property type="entry name" value="Rel_fac_1"/>
    <property type="match status" value="1"/>
</dbReference>
<dbReference type="InterPro" id="IPR005139">
    <property type="entry name" value="PCRF"/>
</dbReference>
<dbReference type="InterPro" id="IPR000352">
    <property type="entry name" value="Pep_chain_release_fac_I"/>
</dbReference>
<dbReference type="InterPro" id="IPR045853">
    <property type="entry name" value="Pep_chain_release_fac_I_sf"/>
</dbReference>
<dbReference type="InterPro" id="IPR050057">
    <property type="entry name" value="Prokaryotic/Mito_RF"/>
</dbReference>
<dbReference type="InterPro" id="IPR004373">
    <property type="entry name" value="RF-1"/>
</dbReference>
<dbReference type="NCBIfam" id="TIGR00019">
    <property type="entry name" value="prfA"/>
    <property type="match status" value="1"/>
</dbReference>
<dbReference type="NCBIfam" id="NF001859">
    <property type="entry name" value="PRK00591.1"/>
    <property type="match status" value="1"/>
</dbReference>
<dbReference type="PANTHER" id="PTHR43804">
    <property type="entry name" value="LD18447P"/>
    <property type="match status" value="1"/>
</dbReference>
<dbReference type="PANTHER" id="PTHR43804:SF7">
    <property type="entry name" value="LD18447P"/>
    <property type="match status" value="1"/>
</dbReference>
<dbReference type="Pfam" id="PF03462">
    <property type="entry name" value="PCRF"/>
    <property type="match status" value="1"/>
</dbReference>
<dbReference type="Pfam" id="PF00472">
    <property type="entry name" value="RF-1"/>
    <property type="match status" value="1"/>
</dbReference>
<dbReference type="SMART" id="SM00937">
    <property type="entry name" value="PCRF"/>
    <property type="match status" value="1"/>
</dbReference>
<dbReference type="SUPFAM" id="SSF75620">
    <property type="entry name" value="Release factor"/>
    <property type="match status" value="1"/>
</dbReference>
<dbReference type="PROSITE" id="PS00745">
    <property type="entry name" value="RF_PROK_I"/>
    <property type="match status" value="1"/>
</dbReference>
<organism>
    <name type="scientific">Burkholderia pseudomallei (strain 1710b)</name>
    <dbReference type="NCBI Taxonomy" id="320372"/>
    <lineage>
        <taxon>Bacteria</taxon>
        <taxon>Pseudomonadati</taxon>
        <taxon>Pseudomonadota</taxon>
        <taxon>Betaproteobacteria</taxon>
        <taxon>Burkholderiales</taxon>
        <taxon>Burkholderiaceae</taxon>
        <taxon>Burkholderia</taxon>
        <taxon>pseudomallei group</taxon>
    </lineage>
</organism>
<protein>
    <recommendedName>
        <fullName evidence="1">Peptide chain release factor 1</fullName>
        <shortName evidence="1">RF-1</shortName>
    </recommendedName>
</protein>